<dbReference type="EMBL" id="GU293011">
    <property type="protein sequence ID" value="ADB56827.1"/>
    <property type="molecule type" value="mRNA"/>
</dbReference>
<dbReference type="SMR" id="D2Y2D4"/>
<dbReference type="ArachnoServer" id="AS001559">
    <property type="toxin name" value="U4-theraphotoxin-Hhn1i"/>
</dbReference>
<dbReference type="GO" id="GO:0005576">
    <property type="term" value="C:extracellular region"/>
    <property type="evidence" value="ECO:0007669"/>
    <property type="project" value="UniProtKB-SubCell"/>
</dbReference>
<dbReference type="GO" id="GO:0035792">
    <property type="term" value="C:host cell postsynaptic membrane"/>
    <property type="evidence" value="ECO:0007669"/>
    <property type="project" value="UniProtKB-KW"/>
</dbReference>
<dbReference type="GO" id="GO:0090729">
    <property type="term" value="F:toxin activity"/>
    <property type="evidence" value="ECO:0007669"/>
    <property type="project" value="UniProtKB-KW"/>
</dbReference>
<dbReference type="InterPro" id="IPR012625">
    <property type="entry name" value="Hwtx-2-like"/>
</dbReference>
<dbReference type="Pfam" id="PF08089">
    <property type="entry name" value="Toxin_20"/>
    <property type="match status" value="1"/>
</dbReference>
<dbReference type="SUPFAM" id="SSF57059">
    <property type="entry name" value="omega toxin-like"/>
    <property type="match status" value="1"/>
</dbReference>
<dbReference type="PROSITE" id="PS60022">
    <property type="entry name" value="HWTX_2"/>
    <property type="match status" value="1"/>
</dbReference>
<evidence type="ECO:0000250" key="1"/>
<evidence type="ECO:0000255" key="2"/>
<evidence type="ECO:0000305" key="3"/>
<reference key="1">
    <citation type="journal article" date="2010" name="J. Proteome Res.">
        <title>Molecular diversification of peptide toxins from the tarantula Haplopelma hainanum (Ornithoctonus hainana) venom based on transcriptomic, peptidomic, and genomic analyses.</title>
        <authorList>
            <person name="Tang X."/>
            <person name="Zhang Y."/>
            <person name="Hu W."/>
            <person name="Xu D."/>
            <person name="Tao H."/>
            <person name="Yang X."/>
            <person name="Li Y."/>
            <person name="Jiang L."/>
            <person name="Liang S."/>
        </authorList>
    </citation>
    <scope>NUCLEOTIDE SEQUENCE [LARGE SCALE MRNA]</scope>
    <source>
        <tissue>Venom gland</tissue>
    </source>
</reference>
<proteinExistence type="evidence at transcript level"/>
<protein>
    <recommendedName>
        <fullName>U4-theraphotoxin-Hhn1i</fullName>
        <shortName>U4-TRTX-Hhn1i</shortName>
    </recommendedName>
    <alternativeName>
        <fullName>Hainantoxin-II-17</fullName>
        <shortName>HNTX-II-17</shortName>
    </alternativeName>
</protein>
<keyword id="KW-1015">Disulfide bond</keyword>
<keyword id="KW-0528">Neurotoxin</keyword>
<keyword id="KW-0629">Postsynaptic neurotoxin</keyword>
<keyword id="KW-0964">Secreted</keyword>
<keyword id="KW-0732">Signal</keyword>
<keyword id="KW-0800">Toxin</keyword>
<sequence>MKVTLIAILTCAAVLVLHTTAAEELEAESQLMEVGMPDTELAAVDEERLFECSVSCEIEKEGNKDCKEKKCKGGWKCKFNMCVKV</sequence>
<comment type="function">
    <text evidence="1">Postsynaptic neurotoxin.</text>
</comment>
<comment type="subcellular location">
    <subcellularLocation>
        <location evidence="1">Secreted</location>
    </subcellularLocation>
</comment>
<comment type="tissue specificity">
    <text>Expressed by the venom gland.</text>
</comment>
<comment type="similarity">
    <text evidence="3">Belongs to the neurotoxin 12 (Hwtx-2) family. 02 (Hwtx-2) subfamily.</text>
</comment>
<accession>D2Y2D4</accession>
<organism>
    <name type="scientific">Cyriopagopus hainanus</name>
    <name type="common">Chinese bird spider</name>
    <name type="synonym">Haplopelma hainanum</name>
    <dbReference type="NCBI Taxonomy" id="209901"/>
    <lineage>
        <taxon>Eukaryota</taxon>
        <taxon>Metazoa</taxon>
        <taxon>Ecdysozoa</taxon>
        <taxon>Arthropoda</taxon>
        <taxon>Chelicerata</taxon>
        <taxon>Arachnida</taxon>
        <taxon>Araneae</taxon>
        <taxon>Mygalomorphae</taxon>
        <taxon>Theraphosidae</taxon>
        <taxon>Haplopelma</taxon>
    </lineage>
</organism>
<name>H2Q01_CYRHA</name>
<feature type="signal peptide" evidence="2">
    <location>
        <begin position="1"/>
        <end position="22"/>
    </location>
</feature>
<feature type="propeptide" id="PRO_0000400801" evidence="1">
    <location>
        <begin position="23"/>
        <end position="48"/>
    </location>
</feature>
<feature type="peptide" id="PRO_0000400802" description="U4-theraphotoxin-Hhn1i">
    <location>
        <begin position="49"/>
        <end position="85"/>
    </location>
</feature>
<feature type="disulfide bond" evidence="1">
    <location>
        <begin position="52"/>
        <end position="66"/>
    </location>
</feature>
<feature type="disulfide bond" evidence="1">
    <location>
        <begin position="56"/>
        <end position="77"/>
    </location>
</feature>
<feature type="disulfide bond" evidence="1">
    <location>
        <begin position="71"/>
        <end position="82"/>
    </location>
</feature>